<name>KI21B_HUMAN</name>
<evidence type="ECO:0000250" key="1">
    <source>
        <dbReference type="UniProtKB" id="F1M5N7"/>
    </source>
</evidence>
<evidence type="ECO:0000250" key="2">
    <source>
        <dbReference type="UniProtKB" id="Q9QXL1"/>
    </source>
</evidence>
<evidence type="ECO:0000255" key="3"/>
<evidence type="ECO:0000255" key="4">
    <source>
        <dbReference type="PROSITE-ProRule" id="PRU00283"/>
    </source>
</evidence>
<evidence type="ECO:0000256" key="5">
    <source>
        <dbReference type="SAM" id="MobiDB-lite"/>
    </source>
</evidence>
<evidence type="ECO:0000303" key="6">
    <source>
    </source>
</evidence>
<evidence type="ECO:0000303" key="7">
    <source>
    </source>
</evidence>
<evidence type="ECO:0000305" key="8"/>
<evidence type="ECO:0007744" key="9">
    <source>
    </source>
</evidence>
<evidence type="ECO:0007744" key="10">
    <source>
    </source>
</evidence>
<evidence type="ECO:0007744" key="11">
    <source>
    </source>
</evidence>
<evidence type="ECO:0007744" key="12">
    <source>
    </source>
</evidence>
<feature type="chain" id="PRO_0000125464" description="Kinesin-like protein KIF21B">
    <location>
        <begin position="1"/>
        <end position="1637"/>
    </location>
</feature>
<feature type="domain" description="Kinesin motor" evidence="4">
    <location>
        <begin position="8"/>
        <end position="370"/>
    </location>
</feature>
<feature type="repeat" description="WD 1">
    <location>
        <begin position="1306"/>
        <end position="1343"/>
    </location>
</feature>
<feature type="repeat" description="WD 2">
    <location>
        <begin position="1346"/>
        <end position="1384"/>
    </location>
</feature>
<feature type="repeat" description="WD 3">
    <location>
        <begin position="1410"/>
        <end position="1448"/>
    </location>
</feature>
<feature type="repeat" description="WD 4">
    <location>
        <begin position="1451"/>
        <end position="1493"/>
    </location>
</feature>
<feature type="repeat" description="WD 5">
    <location>
        <begin position="1502"/>
        <end position="1539"/>
    </location>
</feature>
<feature type="repeat" description="WD 6">
    <location>
        <begin position="1543"/>
        <end position="1582"/>
    </location>
</feature>
<feature type="repeat" description="WD 7">
    <location>
        <begin position="1585"/>
        <end position="1622"/>
    </location>
</feature>
<feature type="region of interest" description="Interaction with TRIM3" evidence="2">
    <location>
        <begin position="400"/>
        <end position="1099"/>
    </location>
</feature>
<feature type="region of interest" description="Disordered" evidence="5">
    <location>
        <begin position="509"/>
        <end position="538"/>
    </location>
</feature>
<feature type="region of interest" description="Disordered" evidence="5">
    <location>
        <begin position="552"/>
        <end position="628"/>
    </location>
</feature>
<feature type="region of interest" description="Disordered" evidence="5">
    <location>
        <begin position="830"/>
        <end position="865"/>
    </location>
</feature>
<feature type="region of interest" description="Disordered" evidence="5">
    <location>
        <begin position="880"/>
        <end position="906"/>
    </location>
</feature>
<feature type="region of interest" description="Disordered" evidence="5">
    <location>
        <begin position="1194"/>
        <end position="1251"/>
    </location>
</feature>
<feature type="coiled-coil region" evidence="3">
    <location>
        <begin position="376"/>
        <end position="604"/>
    </location>
</feature>
<feature type="coiled-coil region" evidence="3">
    <location>
        <begin position="631"/>
        <end position="824"/>
    </location>
</feature>
<feature type="coiled-coil region" evidence="3">
    <location>
        <begin position="928"/>
        <end position="1016"/>
    </location>
</feature>
<feature type="compositionally biased region" description="Low complexity" evidence="5">
    <location>
        <begin position="509"/>
        <end position="533"/>
    </location>
</feature>
<feature type="compositionally biased region" description="Acidic residues" evidence="5">
    <location>
        <begin position="578"/>
        <end position="627"/>
    </location>
</feature>
<feature type="compositionally biased region" description="Low complexity" evidence="5">
    <location>
        <begin position="846"/>
        <end position="865"/>
    </location>
</feature>
<feature type="compositionally biased region" description="Polar residues" evidence="5">
    <location>
        <begin position="1194"/>
        <end position="1217"/>
    </location>
</feature>
<feature type="binding site" evidence="4">
    <location>
        <begin position="87"/>
        <end position="94"/>
    </location>
    <ligand>
        <name>ATP</name>
        <dbReference type="ChEBI" id="CHEBI:30616"/>
    </ligand>
</feature>
<feature type="modified residue" description="Phosphoserine" evidence="2">
    <location>
        <position position="579"/>
    </location>
</feature>
<feature type="modified residue" description="Phosphothreonine" evidence="2">
    <location>
        <position position="582"/>
    </location>
</feature>
<feature type="modified residue" description="Phosphoserine" evidence="12">
    <location>
        <position position="1149"/>
    </location>
</feature>
<feature type="modified residue" description="Phosphoserine" evidence="11 12">
    <location>
        <position position="1167"/>
    </location>
</feature>
<feature type="modified residue" description="Phosphoserine" evidence="12">
    <location>
        <position position="1215"/>
    </location>
</feature>
<feature type="modified residue" description="Phosphothreonine" evidence="9 10 11">
    <location>
        <position position="1237"/>
    </location>
</feature>
<feature type="modified residue" description="Phosphoserine" evidence="10">
    <location>
        <position position="1241"/>
    </location>
</feature>
<feature type="splice variant" id="VSP_016217" description="In isoform 2 and isoform 3." evidence="6 7">
    <location>
        <begin position="1269"/>
        <end position="1281"/>
    </location>
</feature>
<feature type="splice variant" id="VSP_045333" description="In isoform 3 and isoform 4." evidence="6">
    <original>CRVKLWNYVPGLTPCLPRRVLAIKGRATTL</original>
    <variation>LTVKFWSVRRLPHSGP</variation>
    <location>
        <begin position="1607"/>
        <end position="1636"/>
    </location>
</feature>
<gene>
    <name type="primary">KIF21B</name>
    <name type="synonym">KIAA0449</name>
</gene>
<reference key="1">
    <citation type="journal article" date="1997" name="DNA Res.">
        <title>Characterization of cDNA clones in size-fractionated cDNA libraries from human brain.</title>
        <authorList>
            <person name="Seki N."/>
            <person name="Ohira M."/>
            <person name="Nagase T."/>
            <person name="Ishikawa K."/>
            <person name="Miyajima N."/>
            <person name="Nakajima D."/>
            <person name="Nomura N."/>
            <person name="Ohara O."/>
        </authorList>
    </citation>
    <scope>NUCLEOTIDE SEQUENCE [LARGE SCALE MRNA] (ISOFORM 2)</scope>
    <source>
        <tissue>Brain</tissue>
    </source>
</reference>
<reference key="2">
    <citation type="submission" date="2005-08" db="EMBL/GenBank/DDBJ databases">
        <authorList>
            <person name="Ohara O."/>
            <person name="Nagase T."/>
            <person name="Kikuno R."/>
        </authorList>
    </citation>
    <scope>SEQUENCE REVISION</scope>
</reference>
<reference key="3">
    <citation type="journal article" date="2006" name="Nature">
        <title>The DNA sequence and biological annotation of human chromosome 1.</title>
        <authorList>
            <person name="Gregory S.G."/>
            <person name="Barlow K.F."/>
            <person name="McLay K.E."/>
            <person name="Kaul R."/>
            <person name="Swarbreck D."/>
            <person name="Dunham A."/>
            <person name="Scott C.E."/>
            <person name="Howe K.L."/>
            <person name="Woodfine K."/>
            <person name="Spencer C.C.A."/>
            <person name="Jones M.C."/>
            <person name="Gillson C."/>
            <person name="Searle S."/>
            <person name="Zhou Y."/>
            <person name="Kokocinski F."/>
            <person name="McDonald L."/>
            <person name="Evans R."/>
            <person name="Phillips K."/>
            <person name="Atkinson A."/>
            <person name="Cooper R."/>
            <person name="Jones C."/>
            <person name="Hall R.E."/>
            <person name="Andrews T.D."/>
            <person name="Lloyd C."/>
            <person name="Ainscough R."/>
            <person name="Almeida J.P."/>
            <person name="Ambrose K.D."/>
            <person name="Anderson F."/>
            <person name="Andrew R.W."/>
            <person name="Ashwell R.I.S."/>
            <person name="Aubin K."/>
            <person name="Babbage A.K."/>
            <person name="Bagguley C.L."/>
            <person name="Bailey J."/>
            <person name="Beasley H."/>
            <person name="Bethel G."/>
            <person name="Bird C.P."/>
            <person name="Bray-Allen S."/>
            <person name="Brown J.Y."/>
            <person name="Brown A.J."/>
            <person name="Buckley D."/>
            <person name="Burton J."/>
            <person name="Bye J."/>
            <person name="Carder C."/>
            <person name="Chapman J.C."/>
            <person name="Clark S.Y."/>
            <person name="Clarke G."/>
            <person name="Clee C."/>
            <person name="Cobley V."/>
            <person name="Collier R.E."/>
            <person name="Corby N."/>
            <person name="Coville G.J."/>
            <person name="Davies J."/>
            <person name="Deadman R."/>
            <person name="Dunn M."/>
            <person name="Earthrowl M."/>
            <person name="Ellington A.G."/>
            <person name="Errington H."/>
            <person name="Frankish A."/>
            <person name="Frankland J."/>
            <person name="French L."/>
            <person name="Garner P."/>
            <person name="Garnett J."/>
            <person name="Gay L."/>
            <person name="Ghori M.R.J."/>
            <person name="Gibson R."/>
            <person name="Gilby L.M."/>
            <person name="Gillett W."/>
            <person name="Glithero R.J."/>
            <person name="Grafham D.V."/>
            <person name="Griffiths C."/>
            <person name="Griffiths-Jones S."/>
            <person name="Grocock R."/>
            <person name="Hammond S."/>
            <person name="Harrison E.S.I."/>
            <person name="Hart E."/>
            <person name="Haugen E."/>
            <person name="Heath P.D."/>
            <person name="Holmes S."/>
            <person name="Holt K."/>
            <person name="Howden P.J."/>
            <person name="Hunt A.R."/>
            <person name="Hunt S.E."/>
            <person name="Hunter G."/>
            <person name="Isherwood J."/>
            <person name="James R."/>
            <person name="Johnson C."/>
            <person name="Johnson D."/>
            <person name="Joy A."/>
            <person name="Kay M."/>
            <person name="Kershaw J.K."/>
            <person name="Kibukawa M."/>
            <person name="Kimberley A.M."/>
            <person name="King A."/>
            <person name="Knights A.J."/>
            <person name="Lad H."/>
            <person name="Laird G."/>
            <person name="Lawlor S."/>
            <person name="Leongamornlert D.A."/>
            <person name="Lloyd D.M."/>
            <person name="Loveland J."/>
            <person name="Lovell J."/>
            <person name="Lush M.J."/>
            <person name="Lyne R."/>
            <person name="Martin S."/>
            <person name="Mashreghi-Mohammadi M."/>
            <person name="Matthews L."/>
            <person name="Matthews N.S.W."/>
            <person name="McLaren S."/>
            <person name="Milne S."/>
            <person name="Mistry S."/>
            <person name="Moore M.J.F."/>
            <person name="Nickerson T."/>
            <person name="O'Dell C.N."/>
            <person name="Oliver K."/>
            <person name="Palmeiri A."/>
            <person name="Palmer S.A."/>
            <person name="Parker A."/>
            <person name="Patel D."/>
            <person name="Pearce A.V."/>
            <person name="Peck A.I."/>
            <person name="Pelan S."/>
            <person name="Phelps K."/>
            <person name="Phillimore B.J."/>
            <person name="Plumb R."/>
            <person name="Rajan J."/>
            <person name="Raymond C."/>
            <person name="Rouse G."/>
            <person name="Saenphimmachak C."/>
            <person name="Sehra H.K."/>
            <person name="Sheridan E."/>
            <person name="Shownkeen R."/>
            <person name="Sims S."/>
            <person name="Skuce C.D."/>
            <person name="Smith M."/>
            <person name="Steward C."/>
            <person name="Subramanian S."/>
            <person name="Sycamore N."/>
            <person name="Tracey A."/>
            <person name="Tromans A."/>
            <person name="Van Helmond Z."/>
            <person name="Wall M."/>
            <person name="Wallis J.M."/>
            <person name="White S."/>
            <person name="Whitehead S.L."/>
            <person name="Wilkinson J.E."/>
            <person name="Willey D.L."/>
            <person name="Williams H."/>
            <person name="Wilming L."/>
            <person name="Wray P.W."/>
            <person name="Wu Z."/>
            <person name="Coulson A."/>
            <person name="Vaudin M."/>
            <person name="Sulston J.E."/>
            <person name="Durbin R.M."/>
            <person name="Hubbard T."/>
            <person name="Wooster R."/>
            <person name="Dunham I."/>
            <person name="Carter N.P."/>
            <person name="McVean G."/>
            <person name="Ross M.T."/>
            <person name="Harrow J."/>
            <person name="Olson M.V."/>
            <person name="Beck S."/>
            <person name="Rogers J."/>
            <person name="Bentley D.R."/>
        </authorList>
    </citation>
    <scope>NUCLEOTIDE SEQUENCE [LARGE SCALE GENOMIC DNA]</scope>
</reference>
<reference key="4">
    <citation type="submission" date="2005-07" db="EMBL/GenBank/DDBJ databases">
        <authorList>
            <person name="Mural R.J."/>
            <person name="Istrail S."/>
            <person name="Sutton G.G."/>
            <person name="Florea L."/>
            <person name="Halpern A.L."/>
            <person name="Mobarry C.M."/>
            <person name="Lippert R."/>
            <person name="Walenz B."/>
            <person name="Shatkay H."/>
            <person name="Dew I."/>
            <person name="Miller J.R."/>
            <person name="Flanigan M.J."/>
            <person name="Edwards N.J."/>
            <person name="Bolanos R."/>
            <person name="Fasulo D."/>
            <person name="Halldorsson B.V."/>
            <person name="Hannenhalli S."/>
            <person name="Turner R."/>
            <person name="Yooseph S."/>
            <person name="Lu F."/>
            <person name="Nusskern D.R."/>
            <person name="Shue B.C."/>
            <person name="Zheng X.H."/>
            <person name="Zhong F."/>
            <person name="Delcher A.L."/>
            <person name="Huson D.H."/>
            <person name="Kravitz S.A."/>
            <person name="Mouchard L."/>
            <person name="Reinert K."/>
            <person name="Remington K.A."/>
            <person name="Clark A.G."/>
            <person name="Waterman M.S."/>
            <person name="Eichler E.E."/>
            <person name="Adams M.D."/>
            <person name="Hunkapiller M.W."/>
            <person name="Myers E.W."/>
            <person name="Venter J.C."/>
        </authorList>
    </citation>
    <scope>NUCLEOTIDE SEQUENCE [LARGE SCALE GENOMIC DNA]</scope>
</reference>
<reference key="5">
    <citation type="journal article" date="2004" name="Genome Res.">
        <title>The status, quality, and expansion of the NIH full-length cDNA project: the Mammalian Gene Collection (MGC).</title>
        <authorList>
            <consortium name="The MGC Project Team"/>
        </authorList>
    </citation>
    <scope>NUCLEOTIDE SEQUENCE [LARGE SCALE MRNA] (ISOFORMS 3 AND 4)</scope>
</reference>
<reference key="6">
    <citation type="journal article" date="2008" name="Proc. Natl. Acad. Sci. U.S.A.">
        <title>A quantitative atlas of mitotic phosphorylation.</title>
        <authorList>
            <person name="Dephoure N."/>
            <person name="Zhou C."/>
            <person name="Villen J."/>
            <person name="Beausoleil S.A."/>
            <person name="Bakalarski C.E."/>
            <person name="Elledge S.J."/>
            <person name="Gygi S.P."/>
        </authorList>
    </citation>
    <scope>PHOSPHORYLATION [LARGE SCALE ANALYSIS] AT THR-1237</scope>
    <scope>IDENTIFICATION BY MASS SPECTROMETRY [LARGE SCALE ANALYSIS]</scope>
    <source>
        <tissue>Cervix carcinoma</tissue>
    </source>
</reference>
<reference key="7">
    <citation type="journal article" date="2009" name="Sci. Signal.">
        <title>Quantitative phosphoproteomic analysis of T cell receptor signaling reveals system-wide modulation of protein-protein interactions.</title>
        <authorList>
            <person name="Mayya V."/>
            <person name="Lundgren D.H."/>
            <person name="Hwang S.-I."/>
            <person name="Rezaul K."/>
            <person name="Wu L."/>
            <person name="Eng J.K."/>
            <person name="Rodionov V."/>
            <person name="Han D.K."/>
        </authorList>
    </citation>
    <scope>PHOSPHORYLATION [LARGE SCALE ANALYSIS] AT THR-1237 AND SER-1241</scope>
    <scope>IDENTIFICATION BY MASS SPECTROMETRY [LARGE SCALE ANALYSIS]</scope>
    <source>
        <tissue>Leukemic T-cell</tissue>
    </source>
</reference>
<reference key="8">
    <citation type="journal article" date="2011" name="Sci. Signal.">
        <title>System-wide temporal characterization of the proteome and phosphoproteome of human embryonic stem cell differentiation.</title>
        <authorList>
            <person name="Rigbolt K.T."/>
            <person name="Prokhorova T.A."/>
            <person name="Akimov V."/>
            <person name="Henningsen J."/>
            <person name="Johansen P.T."/>
            <person name="Kratchmarova I."/>
            <person name="Kassem M."/>
            <person name="Mann M."/>
            <person name="Olsen J.V."/>
            <person name="Blagoev B."/>
        </authorList>
    </citation>
    <scope>PHOSPHORYLATION [LARGE SCALE ANALYSIS] AT SER-1167 AND THR-1237</scope>
    <scope>IDENTIFICATION BY MASS SPECTROMETRY [LARGE SCALE ANALYSIS]</scope>
</reference>
<reference key="9">
    <citation type="journal article" date="2013" name="J. Proteome Res.">
        <title>Toward a comprehensive characterization of a human cancer cell phosphoproteome.</title>
        <authorList>
            <person name="Zhou H."/>
            <person name="Di Palma S."/>
            <person name="Preisinger C."/>
            <person name="Peng M."/>
            <person name="Polat A.N."/>
            <person name="Heck A.J."/>
            <person name="Mohammed S."/>
        </authorList>
    </citation>
    <scope>PHOSPHORYLATION [LARGE SCALE ANALYSIS] AT SER-1149; SER-1167 AND SER-1215</scope>
    <scope>IDENTIFICATION BY MASS SPECTROMETRY [LARGE SCALE ANALYSIS]</scope>
    <source>
        <tissue>Erythroleukemia</tissue>
    </source>
</reference>
<proteinExistence type="evidence at protein level"/>
<comment type="function">
    <text evidence="2">Plus-end directed microtubule-dependent motor protein which displays processive activity. Is involved in regulation of microtubule dynamics, synapse function and neuronal morphology, including dendritic tree branching and spine formation. Plays a role in lerning and memory. Involved in delivery of gamma-aminobutyric acid (GABA(A)) receptor to cell surface.</text>
</comment>
<comment type="subunit">
    <text evidence="1 2">Interacts with TRIM3; the interaction positively affects motility of KIF21B. Interacts with GABARAP and GABA(A) receptor subunits: GABRG2, GABRA1 and GABRA2. May interact with GABA(A) receptor subunits: GABRB2 and GABRB3.</text>
</comment>
<comment type="interaction">
    <interactant intactId="EBI-12897871">
        <id>O75037-4</id>
    </interactant>
    <interactant intactId="EBI-741158">
        <id>Q96HA8</id>
        <label>NTAQ1</label>
    </interactant>
    <organismsDiffer>false</organismsDiffer>
    <experiments>3</experiments>
</comment>
<comment type="subcellular location">
    <subcellularLocation>
        <location evidence="2">Cytoplasm</location>
        <location evidence="2">Cytoskeleton</location>
    </subcellularLocation>
    <subcellularLocation>
        <location evidence="2">Cell projection</location>
        <location evidence="2">Dendrite</location>
    </subcellularLocation>
    <subcellularLocation>
        <location evidence="2">Cell projection</location>
        <location evidence="2">Growth cone</location>
    </subcellularLocation>
    <subcellularLocation>
        <location evidence="2">Cell projection</location>
        <location evidence="2">Axon</location>
    </subcellularLocation>
    <subcellularLocation>
        <location evidence="1">Cytoplasmic vesicle</location>
    </subcellularLocation>
</comment>
<comment type="alternative products">
    <event type="alternative splicing"/>
    <isoform>
        <id>O75037-1</id>
        <name>1</name>
        <sequence type="displayed"/>
    </isoform>
    <isoform>
        <id>O75037-2</id>
        <name>2</name>
        <sequence type="described" ref="VSP_016217"/>
    </isoform>
    <isoform>
        <id>O75037-3</id>
        <name>3</name>
        <sequence type="described" ref="VSP_016217 VSP_045333"/>
    </isoform>
    <isoform>
        <id>O75037-4</id>
        <name>4</name>
        <sequence type="described" ref="VSP_045333"/>
    </isoform>
</comment>
<comment type="similarity">
    <text evidence="4">Belongs to the TRAFAC class myosin-kinesin ATPase superfamily. Kinesin family.</text>
</comment>
<comment type="sequence caution" evidence="8">
    <conflict type="erroneous initiation">
        <sequence resource="EMBL-CDS" id="BAA32294"/>
    </conflict>
</comment>
<sequence length="1637" mass="182662">MAGQGDCCVKVAVRIRPQLSKEKIEGCHICTSVTPGEPQVLLGKDKAFTYDFVFDLDTWQEQIYSTCVSKLIEGCFEGYNATVLAYGQTGAGKTYTMGTGFDMATSEEEQGIIPRAIAHLFGGIAERKRRAQEQGVAGPEFKVSAQFLELYNEEILDLFDSTRDPDTRHRRSNIKIHEDANGGIYTTGVTSRLIHSQEELIQCLKQGALSRTTASTQMNVQSSRSHAIFTIHLCQMRMCTQPDLVNEAVTGLPDGTPPSSEYETLTAKFHFVDLAGSERLKRTGATGERAKEGISINCGLLALGNVISALGDQSKKVVHVPYRDSKLTRLLQDSLGGNSQTIMIACVSPSDRDFMETLNTLKYANRARNIKNKVVVNQDKTSQQISALRAEIARLQMELMEYKAGKRVIGEDGAEGYSDLFRENAMLQKENGALRLRVKAMQEAIDAINNRVTQLMSQEANLLLAKAGDGNEAIGALIQNYIREIEELRTKLLESEAMNESLRRSLSRASARSPYSLGASPAAPAFGGSPASSMEDASEVIRRAKQDLERLKKKEVRQRRKSPEKEAFKKRAKLQQENSEETDENEAEEEEEERDESGCEEEEGREDEDEDSGSEESLVDSDSDPEEKEVNFQADLADLTCEIEIKQKLIDELENSQRRLQTLKHQYEEKLILLQNKIRDTQLERDRVLQNLSTMECYTEEKANKIKADYEKRLREMNRDLQKLQAAQKEHARLLKNQSRYERELKKLQAEVAEMKKAKVALMKQMREEQQRRRLVETKRNREIAQLKKEQRRQEFQIRALESQKRQQEMVLRRKTQEVSALRRLAKPMSERVAGRAGLKPPMLDSGAEVSASTTSSEAESGARSVSSIVRQWNRKINHFLGDHPAPTVNGTRPARKKFQKKGASQSFSKAARLKWQSLERRIIDIVMQRMTIVNLEADMERLIKKREELFLLQEALRRKRERLQAESPEEEKGLQELAEEIEVLAANIDYINDGITDCQATIVQLEETKEELDSTDTSVVISSCSLAEARLLLDNFLKASIDKGLQVAQKEAQIRLLEGRLRQTDMAGSSQNHLLLDALREKAEAHPELQALIYNVQQENGYASTDEEISEFSEGSFSQSFTMKGSTSHDDFKFKSEPKLSAQMKAVSAECLGPPLDISTKNITKSLASLVEIKEDGVGFSVRDPYYRDRVSRTVSLPTRGSTFPRQSRATETSPLTRRKSYDRGQPIRSTDVGFTPPSSPPTRPRNDRNVFSRLTSNQSQGSALDKSDDSDSSLSEVLRGIISPVGGAKGARTAPLQCVSMAEGHTKPILCLDATDELLFTGSKDRSCKMWNLVTGQEIAALKGHPNNVVSIKYCSHSGLVFSVSTSYIKVWDIRDSAKCIRTLTSSGQVISGDACAATSTRAITSAQGEHQINQIALSPSGTMLYAASGNAVRIWELSRFQPVGKLTGHIGPVMCLTVTQTASQHDLVVTGSKDHYVKMFELGECVTGTIGPTHNFEPPHYDGIECLAIQGDILFSGSRDNGIKKWDLDQQELIQQIPNAHKDWVCALAFIPGRPMLLSACRAGVIKVWNVDNFTPIGEIKGHDSPINAICTNAKHIFTASSDCRVKLWNYVPGLTPCLPRRVLAIKGRATTLP</sequence>
<protein>
    <recommendedName>
        <fullName>Kinesin-like protein KIF21B</fullName>
    </recommendedName>
</protein>
<accession>O75037</accession>
<accession>B2RP62</accession>
<accession>B7ZMI0</accession>
<accession>Q5T4J3</accession>
<keyword id="KW-0025">Alternative splicing</keyword>
<keyword id="KW-0067">ATP-binding</keyword>
<keyword id="KW-0966">Cell projection</keyword>
<keyword id="KW-0175">Coiled coil</keyword>
<keyword id="KW-0963">Cytoplasm</keyword>
<keyword id="KW-0968">Cytoplasmic vesicle</keyword>
<keyword id="KW-0206">Cytoskeleton</keyword>
<keyword id="KW-0493">Microtubule</keyword>
<keyword id="KW-0505">Motor protein</keyword>
<keyword id="KW-0547">Nucleotide-binding</keyword>
<keyword id="KW-0597">Phosphoprotein</keyword>
<keyword id="KW-1267">Proteomics identification</keyword>
<keyword id="KW-1185">Reference proteome</keyword>
<keyword id="KW-0677">Repeat</keyword>
<keyword id="KW-0853">WD repeat</keyword>
<organism>
    <name type="scientific">Homo sapiens</name>
    <name type="common">Human</name>
    <dbReference type="NCBI Taxonomy" id="9606"/>
    <lineage>
        <taxon>Eukaryota</taxon>
        <taxon>Metazoa</taxon>
        <taxon>Chordata</taxon>
        <taxon>Craniata</taxon>
        <taxon>Vertebrata</taxon>
        <taxon>Euteleostomi</taxon>
        <taxon>Mammalia</taxon>
        <taxon>Eutheria</taxon>
        <taxon>Euarchontoglires</taxon>
        <taxon>Primates</taxon>
        <taxon>Haplorrhini</taxon>
        <taxon>Catarrhini</taxon>
        <taxon>Hominidae</taxon>
        <taxon>Homo</taxon>
    </lineage>
</organism>
<dbReference type="EMBL" id="AB007918">
    <property type="protein sequence ID" value="BAA32294.2"/>
    <property type="status" value="ALT_INIT"/>
    <property type="molecule type" value="mRNA"/>
</dbReference>
<dbReference type="EMBL" id="AC099756">
    <property type="status" value="NOT_ANNOTATED_CDS"/>
    <property type="molecule type" value="Genomic_DNA"/>
</dbReference>
<dbReference type="EMBL" id="AL358473">
    <property type="status" value="NOT_ANNOTATED_CDS"/>
    <property type="molecule type" value="Genomic_DNA"/>
</dbReference>
<dbReference type="EMBL" id="CH471067">
    <property type="protein sequence ID" value="EAW91328.1"/>
    <property type="molecule type" value="Genomic_DNA"/>
</dbReference>
<dbReference type="EMBL" id="BC137281">
    <property type="protein sequence ID" value="AAI37282.1"/>
    <property type="molecule type" value="mRNA"/>
</dbReference>
<dbReference type="EMBL" id="BC144557">
    <property type="protein sequence ID" value="AAI44558.1"/>
    <property type="molecule type" value="mRNA"/>
</dbReference>
<dbReference type="CCDS" id="CCDS30965.1">
    <molecule id="O75037-2"/>
</dbReference>
<dbReference type="CCDS" id="CCDS58054.1">
    <molecule id="O75037-3"/>
</dbReference>
<dbReference type="CCDS" id="CCDS58055.1">
    <molecule id="O75037-4"/>
</dbReference>
<dbReference type="CCDS" id="CCDS58056.1">
    <molecule id="O75037-1"/>
</dbReference>
<dbReference type="PIR" id="T00066">
    <property type="entry name" value="T00066"/>
</dbReference>
<dbReference type="RefSeq" id="NP_001239029.1">
    <molecule id="O75037-1"/>
    <property type="nucleotide sequence ID" value="NM_001252100.2"/>
</dbReference>
<dbReference type="RefSeq" id="NP_001239031.1">
    <molecule id="O75037-4"/>
    <property type="nucleotide sequence ID" value="NM_001252102.2"/>
</dbReference>
<dbReference type="RefSeq" id="NP_001239032.1">
    <molecule id="O75037-3"/>
    <property type="nucleotide sequence ID" value="NM_001252103.2"/>
</dbReference>
<dbReference type="RefSeq" id="NP_060066.2">
    <molecule id="O75037-2"/>
    <property type="nucleotide sequence ID" value="NM_017596.3"/>
</dbReference>
<dbReference type="SMR" id="O75037"/>
<dbReference type="BioGRID" id="116684">
    <property type="interactions" value="51"/>
</dbReference>
<dbReference type="FunCoup" id="O75037">
    <property type="interactions" value="125"/>
</dbReference>
<dbReference type="IntAct" id="O75037">
    <property type="interactions" value="43"/>
</dbReference>
<dbReference type="MINT" id="O75037"/>
<dbReference type="STRING" id="9606.ENSP00000411831"/>
<dbReference type="GlyCosmos" id="O75037">
    <property type="glycosylation" value="1 site, 1 glycan"/>
</dbReference>
<dbReference type="GlyGen" id="O75037">
    <property type="glycosylation" value="2 sites, 1 O-linked glycan (1 site)"/>
</dbReference>
<dbReference type="iPTMnet" id="O75037"/>
<dbReference type="PhosphoSitePlus" id="O75037"/>
<dbReference type="BioMuta" id="KIF21B"/>
<dbReference type="jPOST" id="O75037"/>
<dbReference type="MassIVE" id="O75037"/>
<dbReference type="PaxDb" id="9606-ENSP00000411831"/>
<dbReference type="PeptideAtlas" id="O75037"/>
<dbReference type="ProteomicsDB" id="3445"/>
<dbReference type="ProteomicsDB" id="49715">
    <molecule id="O75037-1"/>
</dbReference>
<dbReference type="ProteomicsDB" id="49716">
    <molecule id="O75037-2"/>
</dbReference>
<dbReference type="ProteomicsDB" id="7261"/>
<dbReference type="Antibodypedia" id="20638">
    <property type="antibodies" value="58 antibodies from 14 providers"/>
</dbReference>
<dbReference type="DNASU" id="23046"/>
<dbReference type="Ensembl" id="ENST00000332129.6">
    <molecule id="O75037-2"/>
    <property type="protein sequence ID" value="ENSP00000328494.2"/>
    <property type="gene ID" value="ENSG00000116852.15"/>
</dbReference>
<dbReference type="Ensembl" id="ENST00000360529.9">
    <molecule id="O75037-3"/>
    <property type="protein sequence ID" value="ENSP00000353724.5"/>
    <property type="gene ID" value="ENSG00000116852.15"/>
</dbReference>
<dbReference type="Ensembl" id="ENST00000422435.2">
    <molecule id="O75037-1"/>
    <property type="protein sequence ID" value="ENSP00000411831.2"/>
    <property type="gene ID" value="ENSG00000116852.15"/>
</dbReference>
<dbReference type="Ensembl" id="ENST00000461742.7">
    <molecule id="O75037-4"/>
    <property type="protein sequence ID" value="ENSP00000433808.1"/>
    <property type="gene ID" value="ENSG00000116852.15"/>
</dbReference>
<dbReference type="GeneID" id="23046"/>
<dbReference type="KEGG" id="hsa:23046"/>
<dbReference type="MANE-Select" id="ENST00000461742.7">
    <molecule id="O75037-4"/>
    <property type="protein sequence ID" value="ENSP00000433808.1"/>
    <property type="RefSeq nucleotide sequence ID" value="NM_001252102.2"/>
    <property type="RefSeq protein sequence ID" value="NP_001239031.1"/>
</dbReference>
<dbReference type="UCSC" id="uc001gvr.3">
    <molecule id="O75037-1"/>
    <property type="organism name" value="human"/>
</dbReference>
<dbReference type="AGR" id="HGNC:29442"/>
<dbReference type="CTD" id="23046"/>
<dbReference type="DisGeNET" id="23046"/>
<dbReference type="GeneCards" id="KIF21B"/>
<dbReference type="HGNC" id="HGNC:29442">
    <property type="gene designation" value="KIF21B"/>
</dbReference>
<dbReference type="HPA" id="ENSG00000116852">
    <property type="expression patterns" value="Tissue enhanced (bone marrow, brain, retina)"/>
</dbReference>
<dbReference type="MalaCards" id="KIF21B"/>
<dbReference type="MIM" id="608322">
    <property type="type" value="gene"/>
</dbReference>
<dbReference type="neXtProt" id="NX_O75037"/>
<dbReference type="OpenTargets" id="ENSG00000116852"/>
<dbReference type="PharmGKB" id="PA134925106"/>
<dbReference type="VEuPathDB" id="HostDB:ENSG00000116852"/>
<dbReference type="eggNOG" id="KOG0244">
    <property type="taxonomic scope" value="Eukaryota"/>
</dbReference>
<dbReference type="GeneTree" id="ENSGT00940000159650"/>
<dbReference type="HOGENOM" id="CLU_001485_4_5_1"/>
<dbReference type="InParanoid" id="O75037"/>
<dbReference type="OMA" id="SAQFLEX"/>
<dbReference type="OrthoDB" id="3176171at2759"/>
<dbReference type="PAN-GO" id="O75037">
    <property type="GO annotations" value="6 GO annotations based on evolutionary models"/>
</dbReference>
<dbReference type="PhylomeDB" id="O75037"/>
<dbReference type="TreeFam" id="TF105224"/>
<dbReference type="PathwayCommons" id="O75037"/>
<dbReference type="Reactome" id="R-HSA-6811434">
    <property type="pathway name" value="COPI-dependent Golgi-to-ER retrograde traffic"/>
</dbReference>
<dbReference type="Reactome" id="R-HSA-983189">
    <property type="pathway name" value="Kinesins"/>
</dbReference>
<dbReference type="SignaLink" id="O75037"/>
<dbReference type="SIGNOR" id="O75037"/>
<dbReference type="BioGRID-ORCS" id="23046">
    <property type="hits" value="18 hits in 1163 CRISPR screens"/>
</dbReference>
<dbReference type="ChiTaRS" id="KIF21B">
    <property type="organism name" value="human"/>
</dbReference>
<dbReference type="GenomeRNAi" id="23046"/>
<dbReference type="Pharos" id="O75037">
    <property type="development level" value="Tbio"/>
</dbReference>
<dbReference type="PRO" id="PR:O75037"/>
<dbReference type="Proteomes" id="UP000005640">
    <property type="component" value="Chromosome 1"/>
</dbReference>
<dbReference type="RNAct" id="O75037">
    <property type="molecule type" value="protein"/>
</dbReference>
<dbReference type="Bgee" id="ENSG00000116852">
    <property type="expression patterns" value="Expressed in cortical plate and 155 other cell types or tissues"/>
</dbReference>
<dbReference type="GO" id="GO:0005737">
    <property type="term" value="C:cytoplasm"/>
    <property type="evidence" value="ECO:0000318"/>
    <property type="project" value="GO_Central"/>
</dbReference>
<dbReference type="GO" id="GO:0031410">
    <property type="term" value="C:cytoplasmic vesicle"/>
    <property type="evidence" value="ECO:0007669"/>
    <property type="project" value="UniProtKB-KW"/>
</dbReference>
<dbReference type="GO" id="GO:0030425">
    <property type="term" value="C:dendrite"/>
    <property type="evidence" value="ECO:0007669"/>
    <property type="project" value="UniProtKB-SubCell"/>
</dbReference>
<dbReference type="GO" id="GO:0030426">
    <property type="term" value="C:growth cone"/>
    <property type="evidence" value="ECO:0007669"/>
    <property type="project" value="UniProtKB-SubCell"/>
</dbReference>
<dbReference type="GO" id="GO:0005871">
    <property type="term" value="C:kinesin complex"/>
    <property type="evidence" value="ECO:0000318"/>
    <property type="project" value="GO_Central"/>
</dbReference>
<dbReference type="GO" id="GO:0005874">
    <property type="term" value="C:microtubule"/>
    <property type="evidence" value="ECO:0000318"/>
    <property type="project" value="GO_Central"/>
</dbReference>
<dbReference type="GO" id="GO:0005524">
    <property type="term" value="F:ATP binding"/>
    <property type="evidence" value="ECO:0007669"/>
    <property type="project" value="UniProtKB-KW"/>
</dbReference>
<dbReference type="GO" id="GO:0016887">
    <property type="term" value="F:ATP hydrolysis activity"/>
    <property type="evidence" value="ECO:0000318"/>
    <property type="project" value="GO_Central"/>
</dbReference>
<dbReference type="GO" id="GO:0008017">
    <property type="term" value="F:microtubule binding"/>
    <property type="evidence" value="ECO:0000318"/>
    <property type="project" value="GO_Central"/>
</dbReference>
<dbReference type="GO" id="GO:0003777">
    <property type="term" value="F:microtubule motor activity"/>
    <property type="evidence" value="ECO:0000318"/>
    <property type="project" value="GO_Central"/>
</dbReference>
<dbReference type="GO" id="GO:0007018">
    <property type="term" value="P:microtubule-based movement"/>
    <property type="evidence" value="ECO:0000318"/>
    <property type="project" value="GO_Central"/>
</dbReference>
<dbReference type="CDD" id="cd01372">
    <property type="entry name" value="KISc_KIF4"/>
    <property type="match status" value="1"/>
</dbReference>
<dbReference type="CDD" id="cd22262">
    <property type="entry name" value="Rcc_KIF21B"/>
    <property type="match status" value="1"/>
</dbReference>
<dbReference type="CDD" id="cd00200">
    <property type="entry name" value="WD40"/>
    <property type="match status" value="1"/>
</dbReference>
<dbReference type="FunFam" id="2.130.10.10:FF:000131">
    <property type="entry name" value="Kinesin family member 21A"/>
    <property type="match status" value="1"/>
</dbReference>
<dbReference type="FunFam" id="2.130.10.10:FF:000158">
    <property type="entry name" value="Kinesin family member 21A"/>
    <property type="match status" value="1"/>
</dbReference>
<dbReference type="FunFam" id="2.130.10.10:FF:000490">
    <property type="entry name" value="Kinesin family member 21B"/>
    <property type="match status" value="1"/>
</dbReference>
<dbReference type="FunFam" id="3.40.850.10:FF:000337">
    <property type="entry name" value="Kinesin-like protein"/>
    <property type="match status" value="1"/>
</dbReference>
<dbReference type="FunFam" id="3.40.850.10:FF:000208">
    <property type="entry name" value="kinesin-like protein KIF21B isoform X1"/>
    <property type="match status" value="1"/>
</dbReference>
<dbReference type="Gene3D" id="3.40.850.10">
    <property type="entry name" value="Kinesin motor domain"/>
    <property type="match status" value="1"/>
</dbReference>
<dbReference type="Gene3D" id="2.130.10.10">
    <property type="entry name" value="YVTN repeat-like/Quinoprotein amine dehydrogenase"/>
    <property type="match status" value="2"/>
</dbReference>
<dbReference type="InterPro" id="IPR056533">
    <property type="entry name" value="KIF21A/B_hel_1"/>
</dbReference>
<dbReference type="InterPro" id="IPR056532">
    <property type="entry name" value="KIF21A/B_hel_2"/>
</dbReference>
<dbReference type="InterPro" id="IPR027640">
    <property type="entry name" value="Kinesin-like_fam"/>
</dbReference>
<dbReference type="InterPro" id="IPR019821">
    <property type="entry name" value="Kinesin_motor_CS"/>
</dbReference>
<dbReference type="InterPro" id="IPR001752">
    <property type="entry name" value="Kinesin_motor_dom"/>
</dbReference>
<dbReference type="InterPro" id="IPR036961">
    <property type="entry name" value="Kinesin_motor_dom_sf"/>
</dbReference>
<dbReference type="InterPro" id="IPR027417">
    <property type="entry name" value="P-loop_NTPase"/>
</dbReference>
<dbReference type="InterPro" id="IPR015943">
    <property type="entry name" value="WD40/YVTN_repeat-like_dom_sf"/>
</dbReference>
<dbReference type="InterPro" id="IPR019775">
    <property type="entry name" value="WD40_repeat_CS"/>
</dbReference>
<dbReference type="InterPro" id="IPR036322">
    <property type="entry name" value="WD40_repeat_dom_sf"/>
</dbReference>
<dbReference type="InterPro" id="IPR001680">
    <property type="entry name" value="WD40_rpt"/>
</dbReference>
<dbReference type="PANTHER" id="PTHR47969">
    <property type="entry name" value="CHROMOSOME-ASSOCIATED KINESIN KIF4A-RELATED"/>
    <property type="match status" value="1"/>
</dbReference>
<dbReference type="PANTHER" id="PTHR47969:SF32">
    <property type="entry name" value="KINESIN-LIKE PROTEIN KIF21B ISOFORM X1"/>
    <property type="match status" value="1"/>
</dbReference>
<dbReference type="Pfam" id="PF23203">
    <property type="entry name" value="KIF21A"/>
    <property type="match status" value="1"/>
</dbReference>
<dbReference type="Pfam" id="PF23204">
    <property type="entry name" value="KIF21A_2nd"/>
    <property type="match status" value="1"/>
</dbReference>
<dbReference type="Pfam" id="PF00225">
    <property type="entry name" value="Kinesin"/>
    <property type="match status" value="1"/>
</dbReference>
<dbReference type="Pfam" id="PF00400">
    <property type="entry name" value="WD40"/>
    <property type="match status" value="6"/>
</dbReference>
<dbReference type="PRINTS" id="PR00380">
    <property type="entry name" value="KINESINHEAVY"/>
</dbReference>
<dbReference type="SMART" id="SM00129">
    <property type="entry name" value="KISc"/>
    <property type="match status" value="1"/>
</dbReference>
<dbReference type="SMART" id="SM00320">
    <property type="entry name" value="WD40"/>
    <property type="match status" value="7"/>
</dbReference>
<dbReference type="SUPFAM" id="SSF52540">
    <property type="entry name" value="P-loop containing nucleoside triphosphate hydrolases"/>
    <property type="match status" value="1"/>
</dbReference>
<dbReference type="SUPFAM" id="SSF46579">
    <property type="entry name" value="Prefoldin"/>
    <property type="match status" value="1"/>
</dbReference>
<dbReference type="SUPFAM" id="SSF50978">
    <property type="entry name" value="WD40 repeat-like"/>
    <property type="match status" value="1"/>
</dbReference>
<dbReference type="PROSITE" id="PS00411">
    <property type="entry name" value="KINESIN_MOTOR_1"/>
    <property type="match status" value="1"/>
</dbReference>
<dbReference type="PROSITE" id="PS50067">
    <property type="entry name" value="KINESIN_MOTOR_2"/>
    <property type="match status" value="1"/>
</dbReference>
<dbReference type="PROSITE" id="PS00678">
    <property type="entry name" value="WD_REPEATS_1"/>
    <property type="match status" value="1"/>
</dbReference>
<dbReference type="PROSITE" id="PS50082">
    <property type="entry name" value="WD_REPEATS_2"/>
    <property type="match status" value="4"/>
</dbReference>
<dbReference type="PROSITE" id="PS50294">
    <property type="entry name" value="WD_REPEATS_REGION"/>
    <property type="match status" value="1"/>
</dbReference>